<protein>
    <recommendedName>
        <fullName>Alpha-actinin-1</fullName>
    </recommendedName>
    <alternativeName>
        <fullName>Alpha-actinin cytoskeletal isoform</fullName>
    </alternativeName>
    <alternativeName>
        <fullName>F-actin cross-linking protein</fullName>
    </alternativeName>
    <alternativeName>
        <fullName>Non-muscle alpha-actinin-1</fullName>
    </alternativeName>
</protein>
<comment type="function">
    <text evidence="2">F-actin cross-linking protein which is thought to anchor actin to a variety of intracellular structures. Association with IGSF8 regulates the immune synapse formation and is required for efficient T-cell activation.</text>
</comment>
<comment type="subunit">
    <text evidence="2 3 6 7 8 9 10">Homodimer; antiparallel. Interacts with MYOZ2, TTID and LPP (By similarity). Interacts with DDN (PubMed:16464232). Interacts with PSD. Interacts with MICALL2 (By similarity). Interacts with DNM2 and CTTN (PubMed:21210813). Interacts with PDLIM1 (PubMed:22659164). Interacts with PDLIM2 (PubMed:15505042). Interacts with PDLIM4 (via PDZ domain) (PubMed:14729062). Interacts with IGSF8 (By similarity).</text>
</comment>
<comment type="subcellular location">
    <subcellularLocation>
        <location evidence="9">Cytoplasm</location>
        <location evidence="9">Cytoskeleton</location>
    </subcellularLocation>
    <subcellularLocation>
        <location evidence="2">Cytoplasm</location>
        <location evidence="2">Myofibril</location>
        <location evidence="2">Sarcomere</location>
        <location evidence="2">Z line</location>
    </subcellularLocation>
    <subcellularLocation>
        <location evidence="9">Cell membrane</location>
    </subcellularLocation>
    <subcellularLocation>
        <location evidence="9">Cell junction</location>
    </subcellularLocation>
    <subcellularLocation>
        <location evidence="3">Cell projection</location>
        <location evidence="3">Ruffle</location>
    </subcellularLocation>
    <text evidence="3">Colocalizes with MYOZ2 and PPP3CA at the Z-line of heart and skeletal muscle. Colocalizes with PSD in membrane ruffles and central reticular structures.</text>
</comment>
<comment type="similarity">
    <text evidence="11">Belongs to the alpha-actinin family.</text>
</comment>
<accession>Q9Z1P2</accession>
<dbReference type="EMBL" id="AF115386">
    <property type="protein sequence ID" value="AAD12064.1"/>
    <property type="molecule type" value="mRNA"/>
</dbReference>
<dbReference type="RefSeq" id="NP_112267.1">
    <property type="nucleotide sequence ID" value="NM_031005.4"/>
</dbReference>
<dbReference type="SMR" id="Q9Z1P2"/>
<dbReference type="BioGRID" id="249534">
    <property type="interactions" value="16"/>
</dbReference>
<dbReference type="CORUM" id="Q9Z1P2"/>
<dbReference type="FunCoup" id="Q9Z1P2">
    <property type="interactions" value="1965"/>
</dbReference>
<dbReference type="IntAct" id="Q9Z1P2">
    <property type="interactions" value="8"/>
</dbReference>
<dbReference type="MINT" id="Q9Z1P2"/>
<dbReference type="STRING" id="10116.ENSRNOP00000068851"/>
<dbReference type="iPTMnet" id="Q9Z1P2"/>
<dbReference type="PhosphoSitePlus" id="Q9Z1P2"/>
<dbReference type="jPOST" id="Q9Z1P2"/>
<dbReference type="PaxDb" id="10116-ENSRNOP00000061058"/>
<dbReference type="Ensembl" id="ENSRNOT00000091560.2">
    <property type="protein sequence ID" value="ENSRNOP00000068851.2"/>
    <property type="gene ID" value="ENSRNOG00000056756.2"/>
</dbReference>
<dbReference type="GeneID" id="81634"/>
<dbReference type="KEGG" id="rno:81634"/>
<dbReference type="UCSC" id="RGD:70907">
    <property type="organism name" value="rat"/>
</dbReference>
<dbReference type="AGR" id="RGD:70907"/>
<dbReference type="CTD" id="87"/>
<dbReference type="RGD" id="70907">
    <property type="gene designation" value="Actn1"/>
</dbReference>
<dbReference type="eggNOG" id="KOG0035">
    <property type="taxonomic scope" value="Eukaryota"/>
</dbReference>
<dbReference type="GeneTree" id="ENSGT00940000155548"/>
<dbReference type="InParanoid" id="Q9Z1P2"/>
<dbReference type="Reactome" id="R-RNO-114608">
    <property type="pathway name" value="Platelet degranulation"/>
</dbReference>
<dbReference type="Reactome" id="R-RNO-446388">
    <property type="pathway name" value="Regulation of cytoskeletal remodeling and cell spreading by IPP complex components"/>
</dbReference>
<dbReference type="Reactome" id="R-RNO-9013405">
    <property type="pathway name" value="RHOD GTPase cycle"/>
</dbReference>
<dbReference type="Reactome" id="R-RNO-9013418">
    <property type="pathway name" value="RHOBTB2 GTPase cycle"/>
</dbReference>
<dbReference type="Reactome" id="R-RNO-9035034">
    <property type="pathway name" value="RHOF GTPase cycle"/>
</dbReference>
<dbReference type="PRO" id="PR:Q9Z1P2"/>
<dbReference type="Proteomes" id="UP000002494">
    <property type="component" value="Chromosome 6"/>
</dbReference>
<dbReference type="Bgee" id="ENSRNOG00000056756">
    <property type="expression patterns" value="Expressed in colon and 19 other cell types or tissues"/>
</dbReference>
<dbReference type="ExpressionAtlas" id="Q9Z1P2">
    <property type="expression patterns" value="baseline and differential"/>
</dbReference>
<dbReference type="GO" id="GO:0005884">
    <property type="term" value="C:actin filament"/>
    <property type="evidence" value="ECO:0000266"/>
    <property type="project" value="RGD"/>
</dbReference>
<dbReference type="GO" id="GO:0005903">
    <property type="term" value="C:brush border"/>
    <property type="evidence" value="ECO:0000266"/>
    <property type="project" value="RGD"/>
</dbReference>
<dbReference type="GO" id="GO:0030054">
    <property type="term" value="C:cell junction"/>
    <property type="evidence" value="ECO:0000314"/>
    <property type="project" value="UniProtKB"/>
</dbReference>
<dbReference type="GO" id="GO:0042995">
    <property type="term" value="C:cell projection"/>
    <property type="evidence" value="ECO:0000266"/>
    <property type="project" value="RGD"/>
</dbReference>
<dbReference type="GO" id="GO:0005911">
    <property type="term" value="C:cell-cell junction"/>
    <property type="evidence" value="ECO:0000266"/>
    <property type="project" value="RGD"/>
</dbReference>
<dbReference type="GO" id="GO:0030864">
    <property type="term" value="C:cortical actin cytoskeleton"/>
    <property type="evidence" value="ECO:0000314"/>
    <property type="project" value="RGD"/>
</dbReference>
<dbReference type="GO" id="GO:0005737">
    <property type="term" value="C:cytoplasm"/>
    <property type="evidence" value="ECO:0000314"/>
    <property type="project" value="UniProtKB"/>
</dbReference>
<dbReference type="GO" id="GO:0005856">
    <property type="term" value="C:cytoskeleton"/>
    <property type="evidence" value="ECO:0000314"/>
    <property type="project" value="UniProtKB"/>
</dbReference>
<dbReference type="GO" id="GO:0005829">
    <property type="term" value="C:cytosol"/>
    <property type="evidence" value="ECO:0000304"/>
    <property type="project" value="Reactome"/>
</dbReference>
<dbReference type="GO" id="GO:0043197">
    <property type="term" value="C:dendritic spine"/>
    <property type="evidence" value="ECO:0000314"/>
    <property type="project" value="UniProtKB"/>
</dbReference>
<dbReference type="GO" id="GO:0005916">
    <property type="term" value="C:fascia adherens"/>
    <property type="evidence" value="ECO:0000266"/>
    <property type="project" value="RGD"/>
</dbReference>
<dbReference type="GO" id="GO:0005925">
    <property type="term" value="C:focal adhesion"/>
    <property type="evidence" value="ECO:0000266"/>
    <property type="project" value="RGD"/>
</dbReference>
<dbReference type="GO" id="GO:0098978">
    <property type="term" value="C:glutamatergic synapse"/>
    <property type="evidence" value="ECO:0000266"/>
    <property type="project" value="RGD"/>
</dbReference>
<dbReference type="GO" id="GO:0005886">
    <property type="term" value="C:plasma membrane"/>
    <property type="evidence" value="ECO:0000314"/>
    <property type="project" value="UniProtKB"/>
</dbReference>
<dbReference type="GO" id="GO:0098871">
    <property type="term" value="C:postsynaptic actin cytoskeleton"/>
    <property type="evidence" value="ECO:0000314"/>
    <property type="project" value="SynGO"/>
</dbReference>
<dbReference type="GO" id="GO:0001726">
    <property type="term" value="C:ruffle"/>
    <property type="evidence" value="ECO:0000250"/>
    <property type="project" value="UniProtKB"/>
</dbReference>
<dbReference type="GO" id="GO:0030017">
    <property type="term" value="C:sarcomere"/>
    <property type="evidence" value="ECO:0000266"/>
    <property type="project" value="RGD"/>
</dbReference>
<dbReference type="GO" id="GO:0001725">
    <property type="term" value="C:stress fiber"/>
    <property type="evidence" value="ECO:0000314"/>
    <property type="project" value="RGD"/>
</dbReference>
<dbReference type="GO" id="GO:0045202">
    <property type="term" value="C:synapse"/>
    <property type="evidence" value="ECO:0000314"/>
    <property type="project" value="SynGO"/>
</dbReference>
<dbReference type="GO" id="GO:0030018">
    <property type="term" value="C:Z disc"/>
    <property type="evidence" value="ECO:0000250"/>
    <property type="project" value="UniProtKB"/>
</dbReference>
<dbReference type="GO" id="GO:0051015">
    <property type="term" value="F:actin filament binding"/>
    <property type="evidence" value="ECO:0000266"/>
    <property type="project" value="RGD"/>
</dbReference>
<dbReference type="GO" id="GO:0005509">
    <property type="term" value="F:calcium ion binding"/>
    <property type="evidence" value="ECO:0007669"/>
    <property type="project" value="InterPro"/>
</dbReference>
<dbReference type="GO" id="GO:0005519">
    <property type="term" value="F:cytoskeletal regulatory protein binding"/>
    <property type="evidence" value="ECO:0000353"/>
    <property type="project" value="UniProtKB"/>
</dbReference>
<dbReference type="GO" id="GO:0003725">
    <property type="term" value="F:double-stranded RNA binding"/>
    <property type="evidence" value="ECO:0000266"/>
    <property type="project" value="RGD"/>
</dbReference>
<dbReference type="GO" id="GO:0005178">
    <property type="term" value="F:integrin binding"/>
    <property type="evidence" value="ECO:0000266"/>
    <property type="project" value="RGD"/>
</dbReference>
<dbReference type="GO" id="GO:0019904">
    <property type="term" value="F:protein domain specific binding"/>
    <property type="evidence" value="ECO:0000353"/>
    <property type="project" value="RGD"/>
</dbReference>
<dbReference type="GO" id="GO:0042803">
    <property type="term" value="F:protein homodimerization activity"/>
    <property type="evidence" value="ECO:0000266"/>
    <property type="project" value="RGD"/>
</dbReference>
<dbReference type="GO" id="GO:0099186">
    <property type="term" value="F:structural constituent of postsynapse"/>
    <property type="evidence" value="ECO:0000266"/>
    <property type="project" value="RGD"/>
</dbReference>
<dbReference type="GO" id="GO:0003713">
    <property type="term" value="F:transcription coactivator activity"/>
    <property type="evidence" value="ECO:0000266"/>
    <property type="project" value="RGD"/>
</dbReference>
<dbReference type="GO" id="GO:0044325">
    <property type="term" value="F:transmembrane transporter binding"/>
    <property type="evidence" value="ECO:0000266"/>
    <property type="project" value="RGD"/>
</dbReference>
<dbReference type="GO" id="GO:0017166">
    <property type="term" value="F:vinculin binding"/>
    <property type="evidence" value="ECO:0000266"/>
    <property type="project" value="RGD"/>
</dbReference>
<dbReference type="GO" id="GO:0030036">
    <property type="term" value="P:actin cytoskeleton organization"/>
    <property type="evidence" value="ECO:0000318"/>
    <property type="project" value="GO_Central"/>
</dbReference>
<dbReference type="GO" id="GO:0051017">
    <property type="term" value="P:actin filament bundle assembly"/>
    <property type="evidence" value="ECO:0000266"/>
    <property type="project" value="RGD"/>
</dbReference>
<dbReference type="GO" id="GO:0051639">
    <property type="term" value="P:actin filament network formation"/>
    <property type="evidence" value="ECO:0000266"/>
    <property type="project" value="RGD"/>
</dbReference>
<dbReference type="GO" id="GO:0007015">
    <property type="term" value="P:actin filament organization"/>
    <property type="evidence" value="ECO:0000266"/>
    <property type="project" value="RGD"/>
</dbReference>
<dbReference type="GO" id="GO:0048041">
    <property type="term" value="P:focal adhesion assembly"/>
    <property type="evidence" value="ECO:0000266"/>
    <property type="project" value="RGD"/>
</dbReference>
<dbReference type="GO" id="GO:0055001">
    <property type="term" value="P:muscle cell development"/>
    <property type="evidence" value="ECO:0000318"/>
    <property type="project" value="GO_Central"/>
</dbReference>
<dbReference type="GO" id="GO:0030220">
    <property type="term" value="P:platelet formation"/>
    <property type="evidence" value="ECO:0000266"/>
    <property type="project" value="RGD"/>
</dbReference>
<dbReference type="GO" id="GO:0036344">
    <property type="term" value="P:platelet morphogenesis"/>
    <property type="evidence" value="ECO:0000266"/>
    <property type="project" value="RGD"/>
</dbReference>
<dbReference type="CDD" id="cd21214">
    <property type="entry name" value="CH_ACTN_rpt1"/>
    <property type="match status" value="1"/>
</dbReference>
<dbReference type="CDD" id="cd21216">
    <property type="entry name" value="CH_ACTN_rpt2"/>
    <property type="match status" value="1"/>
</dbReference>
<dbReference type="CDD" id="cd00051">
    <property type="entry name" value="EFh"/>
    <property type="match status" value="1"/>
</dbReference>
<dbReference type="CDD" id="cd00176">
    <property type="entry name" value="SPEC"/>
    <property type="match status" value="2"/>
</dbReference>
<dbReference type="FunFam" id="1.10.238.10:FF:000004">
    <property type="entry name" value="Actinin alpha 1"/>
    <property type="match status" value="1"/>
</dbReference>
<dbReference type="FunFam" id="1.10.418.10:FF:000001">
    <property type="entry name" value="Actinin alpha 1"/>
    <property type="match status" value="1"/>
</dbReference>
<dbReference type="FunFam" id="1.20.58.60:FF:000004">
    <property type="entry name" value="Actinin alpha 1"/>
    <property type="match status" value="1"/>
</dbReference>
<dbReference type="FunFam" id="1.20.58.60:FF:000005">
    <property type="entry name" value="Actinin alpha 1"/>
    <property type="match status" value="1"/>
</dbReference>
<dbReference type="FunFam" id="1.10.418.10:FF:000005">
    <property type="entry name" value="Actinin alpha 4"/>
    <property type="match status" value="1"/>
</dbReference>
<dbReference type="FunFam" id="1.10.238.10:FF:000018">
    <property type="entry name" value="Actinin, alpha 1"/>
    <property type="match status" value="1"/>
</dbReference>
<dbReference type="FunFam" id="1.20.58.60:FF:000002">
    <property type="entry name" value="Actinin, alpha 1"/>
    <property type="match status" value="1"/>
</dbReference>
<dbReference type="FunFam" id="1.20.58.60:FF:000003">
    <property type="entry name" value="Actinin, alpha 1"/>
    <property type="match status" value="1"/>
</dbReference>
<dbReference type="Gene3D" id="1.20.58.60">
    <property type="match status" value="4"/>
</dbReference>
<dbReference type="Gene3D" id="1.10.418.10">
    <property type="entry name" value="Calponin-like domain"/>
    <property type="match status" value="2"/>
</dbReference>
<dbReference type="Gene3D" id="1.10.238.10">
    <property type="entry name" value="EF-hand"/>
    <property type="match status" value="2"/>
</dbReference>
<dbReference type="InterPro" id="IPR001589">
    <property type="entry name" value="Actinin_actin-bd_CS"/>
</dbReference>
<dbReference type="InterPro" id="IPR001715">
    <property type="entry name" value="CH_dom"/>
</dbReference>
<dbReference type="InterPro" id="IPR036872">
    <property type="entry name" value="CH_dom_sf"/>
</dbReference>
<dbReference type="InterPro" id="IPR011992">
    <property type="entry name" value="EF-hand-dom_pair"/>
</dbReference>
<dbReference type="InterPro" id="IPR014837">
    <property type="entry name" value="EF-hand_Ca_insen"/>
</dbReference>
<dbReference type="InterPro" id="IPR018247">
    <property type="entry name" value="EF_Hand_1_Ca_BS"/>
</dbReference>
<dbReference type="InterPro" id="IPR002048">
    <property type="entry name" value="EF_hand_dom"/>
</dbReference>
<dbReference type="InterPro" id="IPR018159">
    <property type="entry name" value="Spectrin/alpha-actinin"/>
</dbReference>
<dbReference type="InterPro" id="IPR002017">
    <property type="entry name" value="Spectrin_repeat"/>
</dbReference>
<dbReference type="PANTHER" id="PTHR11915">
    <property type="entry name" value="SPECTRIN/FILAMIN RELATED CYTOSKELETAL PROTEIN"/>
    <property type="match status" value="1"/>
</dbReference>
<dbReference type="Pfam" id="PF00307">
    <property type="entry name" value="CH"/>
    <property type="match status" value="2"/>
</dbReference>
<dbReference type="Pfam" id="PF13405">
    <property type="entry name" value="EF-hand_6"/>
    <property type="match status" value="1"/>
</dbReference>
<dbReference type="Pfam" id="PF08726">
    <property type="entry name" value="EFhand_Ca_insen"/>
    <property type="match status" value="1"/>
</dbReference>
<dbReference type="Pfam" id="PF00435">
    <property type="entry name" value="Spectrin"/>
    <property type="match status" value="4"/>
</dbReference>
<dbReference type="SMART" id="SM00033">
    <property type="entry name" value="CH"/>
    <property type="match status" value="2"/>
</dbReference>
<dbReference type="SMART" id="SM00054">
    <property type="entry name" value="EFh"/>
    <property type="match status" value="2"/>
</dbReference>
<dbReference type="SMART" id="SM01184">
    <property type="entry name" value="efhand_Ca_insen"/>
    <property type="match status" value="1"/>
</dbReference>
<dbReference type="SMART" id="SM00150">
    <property type="entry name" value="SPEC"/>
    <property type="match status" value="3"/>
</dbReference>
<dbReference type="SUPFAM" id="SSF47576">
    <property type="entry name" value="Calponin-homology domain, CH-domain"/>
    <property type="match status" value="1"/>
</dbReference>
<dbReference type="SUPFAM" id="SSF47473">
    <property type="entry name" value="EF-hand"/>
    <property type="match status" value="1"/>
</dbReference>
<dbReference type="SUPFAM" id="SSF46966">
    <property type="entry name" value="Spectrin repeat"/>
    <property type="match status" value="4"/>
</dbReference>
<dbReference type="PROSITE" id="PS00019">
    <property type="entry name" value="ACTININ_1"/>
    <property type="match status" value="1"/>
</dbReference>
<dbReference type="PROSITE" id="PS00020">
    <property type="entry name" value="ACTININ_2"/>
    <property type="match status" value="1"/>
</dbReference>
<dbReference type="PROSITE" id="PS50021">
    <property type="entry name" value="CH"/>
    <property type="match status" value="2"/>
</dbReference>
<dbReference type="PROSITE" id="PS00018">
    <property type="entry name" value="EF_HAND_1"/>
    <property type="match status" value="1"/>
</dbReference>
<dbReference type="PROSITE" id="PS50222">
    <property type="entry name" value="EF_HAND_2"/>
    <property type="match status" value="2"/>
</dbReference>
<organism>
    <name type="scientific">Rattus norvegicus</name>
    <name type="common">Rat</name>
    <dbReference type="NCBI Taxonomy" id="10116"/>
    <lineage>
        <taxon>Eukaryota</taxon>
        <taxon>Metazoa</taxon>
        <taxon>Chordata</taxon>
        <taxon>Craniata</taxon>
        <taxon>Vertebrata</taxon>
        <taxon>Euteleostomi</taxon>
        <taxon>Mammalia</taxon>
        <taxon>Eutheria</taxon>
        <taxon>Euarchontoglires</taxon>
        <taxon>Glires</taxon>
        <taxon>Rodentia</taxon>
        <taxon>Myomorpha</taxon>
        <taxon>Muroidea</taxon>
        <taxon>Muridae</taxon>
        <taxon>Murinae</taxon>
        <taxon>Rattus</taxon>
    </lineage>
</organism>
<evidence type="ECO:0000250" key="1"/>
<evidence type="ECO:0000250" key="2">
    <source>
        <dbReference type="UniProtKB" id="P12814"/>
    </source>
</evidence>
<evidence type="ECO:0000250" key="3">
    <source>
        <dbReference type="UniProtKB" id="Q7TPR4"/>
    </source>
</evidence>
<evidence type="ECO:0000255" key="4">
    <source>
        <dbReference type="PROSITE-ProRule" id="PRU00044"/>
    </source>
</evidence>
<evidence type="ECO:0000255" key="5">
    <source>
        <dbReference type="PROSITE-ProRule" id="PRU00448"/>
    </source>
</evidence>
<evidence type="ECO:0000269" key="6">
    <source>
    </source>
</evidence>
<evidence type="ECO:0000269" key="7">
    <source>
    </source>
</evidence>
<evidence type="ECO:0000269" key="8">
    <source>
    </source>
</evidence>
<evidence type="ECO:0000269" key="9">
    <source>
    </source>
</evidence>
<evidence type="ECO:0000269" key="10">
    <source>
    </source>
</evidence>
<evidence type="ECO:0000305" key="11"/>
<evidence type="ECO:0007744" key="12">
    <source>
    </source>
</evidence>
<proteinExistence type="evidence at protein level"/>
<sequence>MDHYDSQQTNDYMQPEEDWDRDLLLDPAWEKQQRKTFTAWCNSHLRKAGTQIENIEEDFRDGLKLMLLLEVISGERLAKPERGKMRVHKISNVNKALDFIASKGVKLVSIGAEEIVDGNVKMTLGMIWTIILRFAIQDISVEETSAKEGLLLWCQRKTAPYKNVNIQNFHISWKDGLGFCALIHRHRPELIDYGKLRKDDPLTNLNTAFDVAERYLDIPKMLDAEDIVGTARPDEKAIMTYVSSFYHAFSGAQKAETAANRICKVLAVNQENEQLMEDYEKLASDLLEWIRRTIPWLENRVPENTMQAMQQKLEDFRDYRRLHKPPKVQEKCQLEINFNTLQTKLRLSNRPAFMPSEGRMVSDINNAWGCLEQAEKGYEEWLLNEIRRLERLDHLAEKFRQKASIHEAWTDGKEAMLRQKDYETATLSEIKALLKKHEAFESDLAAHQDRVEQIAAIAQELNELDYYDSPSVNARCQKICDQWDNLGALTQKRREALERTEKLLETIDQLYLEYAKRAAPFNNWMEGAMEDLQDTFIVHTIEEIQGLTTAHEQFKATLPDADKERLAILGIHNEVSKIVQTYHVNMAGTNPYTTITPQEINGKWDHVRQLVPRRDQALTEEHSRQQHNERLRKQFGAQANVIGPWIQTKMEEIGRISIEMHGTLEDQLSHLRQYEKSIVNYKPKIDQLEGDHQLIQEALIFDNKHTNYTMEHIRVGWEQLLTTIARTINEVENQILTRDAKGISQEQMNEFRASFNHFDRDHSGTLGPEEFKACLISLGYDIGNDPQGEAEFARIMSIVDPNRLGVVTFQAFIDFMSRETADTDTADQVMASFKILAGDKNYITGDELRRELPPDQAEYCIARMAPYAGPDSVPGALDYMSFSTALYGESDL</sequence>
<feature type="chain" id="PRO_0000073433" description="Alpha-actinin-1">
    <location>
        <begin position="1"/>
        <end position="892"/>
    </location>
</feature>
<feature type="domain" description="Calponin-homology (CH) 1" evidence="4">
    <location>
        <begin position="31"/>
        <end position="135"/>
    </location>
</feature>
<feature type="domain" description="Calponin-homology (CH) 2" evidence="4">
    <location>
        <begin position="144"/>
        <end position="250"/>
    </location>
</feature>
<feature type="repeat" description="Spectrin 1">
    <location>
        <begin position="274"/>
        <end position="384"/>
    </location>
</feature>
<feature type="repeat" description="Spectrin 2">
    <location>
        <begin position="394"/>
        <end position="499"/>
    </location>
</feature>
<feature type="repeat" description="Spectrin 3">
    <location>
        <begin position="509"/>
        <end position="620"/>
    </location>
</feature>
<feature type="repeat" description="Spectrin 4">
    <location>
        <begin position="630"/>
        <end position="733"/>
    </location>
</feature>
<feature type="domain" description="EF-hand 1" evidence="5">
    <location>
        <begin position="746"/>
        <end position="781"/>
    </location>
</feature>
<feature type="domain" description="EF-hand 2" evidence="5">
    <location>
        <begin position="787"/>
        <end position="822"/>
    </location>
</feature>
<feature type="region of interest" description="Actin-binding">
    <location>
        <begin position="1"/>
        <end position="247"/>
    </location>
</feature>
<feature type="region of interest" description="Interaction with DDN" evidence="1">
    <location>
        <begin position="274"/>
        <end position="733"/>
    </location>
</feature>
<feature type="binding site" evidence="5">
    <location>
        <position position="759"/>
    </location>
    <ligand>
        <name>Ca(2+)</name>
        <dbReference type="ChEBI" id="CHEBI:29108"/>
    </ligand>
</feature>
<feature type="binding site" evidence="5">
    <location>
        <position position="761"/>
    </location>
    <ligand>
        <name>Ca(2+)</name>
        <dbReference type="ChEBI" id="CHEBI:29108"/>
    </ligand>
</feature>
<feature type="binding site" evidence="5">
    <location>
        <position position="763"/>
    </location>
    <ligand>
        <name>Ca(2+)</name>
        <dbReference type="ChEBI" id="CHEBI:29108"/>
    </ligand>
</feature>
<feature type="binding site" evidence="5">
    <location>
        <position position="765"/>
    </location>
    <ligand>
        <name>Ca(2+)</name>
        <dbReference type="ChEBI" id="CHEBI:29108"/>
    </ligand>
</feature>
<feature type="binding site" evidence="5">
    <location>
        <position position="770"/>
    </location>
    <ligand>
        <name>Ca(2+)</name>
        <dbReference type="ChEBI" id="CHEBI:29108"/>
    </ligand>
</feature>
<feature type="modified residue" description="N-acetylmethionine" evidence="2">
    <location>
        <position position="1"/>
    </location>
</feature>
<feature type="modified residue" description="Phosphoserine" evidence="2">
    <location>
        <position position="6"/>
    </location>
</feature>
<feature type="modified residue" description="Phosphotyrosine; by FAK1" evidence="2">
    <location>
        <position position="12"/>
    </location>
</feature>
<feature type="modified residue" description="N6-acetyllysine" evidence="2">
    <location>
        <position position="95"/>
    </location>
</feature>
<feature type="modified residue" description="N6-acetyllysine" evidence="2">
    <location>
        <position position="195"/>
    </location>
</feature>
<feature type="modified residue" description="Phosphoserine" evidence="2">
    <location>
        <position position="471"/>
    </location>
</feature>
<feature type="modified residue" description="N6-acetyllysine" evidence="2">
    <location>
        <position position="676"/>
    </location>
</feature>
<feature type="modified residue" description="Phosphoserine" evidence="2">
    <location>
        <position position="677"/>
    </location>
</feature>
<feature type="modified residue" description="Phosphoserine" evidence="12">
    <location>
        <position position="890"/>
    </location>
</feature>
<gene>
    <name type="primary">Actn1</name>
</gene>
<keyword id="KW-0007">Acetylation</keyword>
<keyword id="KW-0009">Actin-binding</keyword>
<keyword id="KW-0106">Calcium</keyword>
<keyword id="KW-0965">Cell junction</keyword>
<keyword id="KW-1003">Cell membrane</keyword>
<keyword id="KW-0966">Cell projection</keyword>
<keyword id="KW-0963">Cytoplasm</keyword>
<keyword id="KW-0206">Cytoskeleton</keyword>
<keyword id="KW-0472">Membrane</keyword>
<keyword id="KW-0479">Metal-binding</keyword>
<keyword id="KW-0597">Phosphoprotein</keyword>
<keyword id="KW-1185">Reference proteome</keyword>
<keyword id="KW-0677">Repeat</keyword>
<name>ACTN1_RAT</name>
<reference key="1">
    <citation type="submission" date="1998-12" db="EMBL/GenBank/DDBJ databases">
        <title>Rattus norvegicus non-muscle alpha-actinin 1 mRNA.</title>
        <authorList>
            <person name="Schulz T.W."/>
            <person name="Seeburg P.H."/>
        </authorList>
    </citation>
    <scope>NUCLEOTIDE SEQUENCE [MRNA]</scope>
    <source>
        <tissue>Hippocampus</tissue>
    </source>
</reference>
<reference key="2">
    <citation type="journal article" date="2004" name="Exp. Cell Res.">
        <title>The PDZ-LIM protein RIL modulates actin stress fiber turnover and enhances the association of alpha-actinin with F-actin.</title>
        <authorList>
            <person name="Vallenius T."/>
            <person name="Scharm B."/>
            <person name="Vesikansa A."/>
            <person name="Luukko K."/>
            <person name="Schaefer R."/>
            <person name="Maekelae T.P."/>
        </authorList>
    </citation>
    <scope>INTERACTION WITH PDLIM4</scope>
</reference>
<reference key="3">
    <citation type="journal article" date="2004" name="Invest. Ophthalmol. Vis. Sci.">
        <title>Pdlim2, a novel PDZ-LIM domain protein, interacts with alpha-actinins and filamin A.</title>
        <authorList>
            <person name="Torrado M."/>
            <person name="Senatorov V.V."/>
            <person name="Trivedi R."/>
            <person name="Fariss R.N."/>
            <person name="Tomarev S.I."/>
        </authorList>
    </citation>
    <scope>INTERACTION WITH PDLIM2</scope>
</reference>
<reference key="4">
    <citation type="journal article" date="2006" name="J. Neurochem.">
        <title>Postsynaptic recruitment of Dendrin depends on both dendritic mRNA transport and synaptic anchoring.</title>
        <authorList>
            <person name="Kremerskothen J."/>
            <person name="Kindler S."/>
            <person name="Finger I."/>
            <person name="Veltel S."/>
            <person name="Barnekow A."/>
        </authorList>
    </citation>
    <scope>INTERACTION WITH DDN</scope>
</reference>
<reference key="5">
    <citation type="journal article" date="2011" name="J. Neurochem.">
        <title>Growth cone morphology and spreading are regulated by a dynamin-cortactin complex at point contacts in hippocampal neurons.</title>
        <authorList>
            <person name="Kurklinsky S."/>
            <person name="Chen J."/>
            <person name="McNiven M.A."/>
        </authorList>
    </citation>
    <scope>SUBCELLULAR LOCATION</scope>
    <scope>INTERACTION WITH CTTN AND DNM2</scope>
</reference>
<reference key="6">
    <citation type="journal article" date="2012" name="Exp. Cell Res.">
        <title>CLP36 and RIL recruit alpha-actinin-1 to stress fibers and differentially regulate stress fiber dynamics in F2408 fibroblasts.</title>
        <authorList>
            <person name="Miyazaki K."/>
            <person name="Ohno K."/>
            <person name="Tamura N."/>
            <person name="Sasaki T."/>
            <person name="Sato K."/>
        </authorList>
    </citation>
    <scope>INTERACTION WITH PDLIM1</scope>
</reference>
<reference key="7">
    <citation type="journal article" date="2012" name="Nat. Commun.">
        <title>Quantitative maps of protein phosphorylation sites across 14 different rat organs and tissues.</title>
        <authorList>
            <person name="Lundby A."/>
            <person name="Secher A."/>
            <person name="Lage K."/>
            <person name="Nordsborg N.B."/>
            <person name="Dmytriyev A."/>
            <person name="Lundby C."/>
            <person name="Olsen J.V."/>
        </authorList>
    </citation>
    <scope>PHOSPHORYLATION [LARGE SCALE ANALYSIS] AT SER-890</scope>
    <scope>IDENTIFICATION BY MASS SPECTROMETRY [LARGE SCALE ANALYSIS]</scope>
</reference>